<reference key="1">
    <citation type="journal article" date="2007" name="J. Bacteriol.">
        <title>Complete genome of acute rheumatic fever-associated serotype M5 Streptococcus pyogenes strain Manfredo.</title>
        <authorList>
            <person name="Holden M.T.G."/>
            <person name="Scott A."/>
            <person name="Cherevach I."/>
            <person name="Chillingworth T."/>
            <person name="Churcher C."/>
            <person name="Cronin A."/>
            <person name="Dowd L."/>
            <person name="Feltwell T."/>
            <person name="Hamlin N."/>
            <person name="Holroyd S."/>
            <person name="Jagels K."/>
            <person name="Moule S."/>
            <person name="Mungall K."/>
            <person name="Quail M.A."/>
            <person name="Price C."/>
            <person name="Rabbinowitsch E."/>
            <person name="Sharp S."/>
            <person name="Skelton J."/>
            <person name="Whitehead S."/>
            <person name="Barrell B.G."/>
            <person name="Kehoe M."/>
            <person name="Parkhill J."/>
        </authorList>
    </citation>
    <scope>NUCLEOTIDE SEQUENCE [LARGE SCALE GENOMIC DNA]</scope>
    <source>
        <strain>Manfredo</strain>
    </source>
</reference>
<reference key="2">
    <citation type="journal article" date="1998" name="Infect. Immun.">
        <title>Inhibition of human peripheral blood mononuclear cell proliferation by Streptococcus pyogenes cell extract is associated with arginine deiminase activity.</title>
        <authorList>
            <person name="Degnan B.A."/>
            <person name="Palmer J.M."/>
            <person name="Robson T."/>
            <person name="Jones C.E.D."/>
            <person name="Fischer M."/>
            <person name="Glanville M."/>
            <person name="Mellor G.D."/>
            <person name="Diamond A.G."/>
            <person name="Kehoe M.A."/>
            <person name="Goodacre J.A."/>
        </authorList>
    </citation>
    <scope>PROTEIN SEQUENCE OF 2-16</scope>
    <scope>CHARACTERIZATION</scope>
</reference>
<comment type="function">
    <text>Antitumor protein. Has a powerful and dose-dependent inhibitory effect on antigen, superantigen, or mitogen-stimulated human peripheral blood mononuclear cell (PBMC) proliferation. It may inhibit cell proliferation by arresting cell cycle and inducing apoptosis.</text>
</comment>
<comment type="catalytic activity">
    <reaction>
        <text>L-arginine + H2O = L-citrulline + NH4(+)</text>
        <dbReference type="Rhea" id="RHEA:19597"/>
        <dbReference type="ChEBI" id="CHEBI:15377"/>
        <dbReference type="ChEBI" id="CHEBI:28938"/>
        <dbReference type="ChEBI" id="CHEBI:32682"/>
        <dbReference type="ChEBI" id="CHEBI:57743"/>
        <dbReference type="EC" id="3.5.3.6"/>
    </reaction>
</comment>
<comment type="pathway">
    <text>Amino-acid degradation; L-arginine degradation via ADI pathway; carbamoyl phosphate from L-arginine: step 1/2.</text>
</comment>
<comment type="subunit">
    <text>Homodimer.</text>
</comment>
<comment type="subcellular location">
    <subcellularLocation>
        <location evidence="3">Cytoplasm</location>
    </subcellularLocation>
</comment>
<comment type="PTM">
    <text evidence="1">Glycosylated.</text>
</comment>
<comment type="similarity">
    <text evidence="3">Belongs to the arginine deiminase family.</text>
</comment>
<dbReference type="EC" id="3.5.3.6"/>
<dbReference type="EMBL" id="AM295007">
    <property type="protein sequence ID" value="CAM29914.1"/>
    <property type="molecule type" value="Genomic_DNA"/>
</dbReference>
<dbReference type="RefSeq" id="WP_011888729.1">
    <property type="nucleotide sequence ID" value="NC_009332.1"/>
</dbReference>
<dbReference type="SMR" id="P58827"/>
<dbReference type="KEGG" id="spf:SpyM50577"/>
<dbReference type="HOGENOM" id="CLU_052662_0_1_9"/>
<dbReference type="UniPathway" id="UPA00254">
    <property type="reaction ID" value="UER00364"/>
</dbReference>
<dbReference type="GO" id="GO:0005737">
    <property type="term" value="C:cytoplasm"/>
    <property type="evidence" value="ECO:0007669"/>
    <property type="project" value="UniProtKB-SubCell"/>
</dbReference>
<dbReference type="GO" id="GO:0016990">
    <property type="term" value="F:arginine deiminase activity"/>
    <property type="evidence" value="ECO:0007669"/>
    <property type="project" value="UniProtKB-UniRule"/>
</dbReference>
<dbReference type="GO" id="GO:0019547">
    <property type="term" value="P:arginine catabolic process to ornithine"/>
    <property type="evidence" value="ECO:0007669"/>
    <property type="project" value="UniProtKB-UniRule"/>
</dbReference>
<dbReference type="GO" id="GO:0019546">
    <property type="term" value="P:arginine deiminase pathway"/>
    <property type="evidence" value="ECO:0007669"/>
    <property type="project" value="TreeGrafter"/>
</dbReference>
<dbReference type="Gene3D" id="1.10.3930.10">
    <property type="entry name" value="Arginine deiminase"/>
    <property type="match status" value="1"/>
</dbReference>
<dbReference type="Gene3D" id="3.75.10.10">
    <property type="entry name" value="L-arginine/glycine Amidinotransferase, Chain A"/>
    <property type="match status" value="1"/>
</dbReference>
<dbReference type="HAMAP" id="MF_00242">
    <property type="entry name" value="Arg_deiminase"/>
    <property type="match status" value="1"/>
</dbReference>
<dbReference type="InterPro" id="IPR003876">
    <property type="entry name" value="Arg_deiminase"/>
</dbReference>
<dbReference type="NCBIfam" id="TIGR01078">
    <property type="entry name" value="arcA"/>
    <property type="match status" value="1"/>
</dbReference>
<dbReference type="NCBIfam" id="NF002381">
    <property type="entry name" value="PRK01388.1"/>
    <property type="match status" value="1"/>
</dbReference>
<dbReference type="PANTHER" id="PTHR47271">
    <property type="entry name" value="ARGININE DEIMINASE"/>
    <property type="match status" value="1"/>
</dbReference>
<dbReference type="PANTHER" id="PTHR47271:SF2">
    <property type="entry name" value="ARGININE DEIMINASE"/>
    <property type="match status" value="1"/>
</dbReference>
<dbReference type="Pfam" id="PF02274">
    <property type="entry name" value="ADI"/>
    <property type="match status" value="1"/>
</dbReference>
<dbReference type="PIRSF" id="PIRSF006356">
    <property type="entry name" value="Arg_deiminase"/>
    <property type="match status" value="1"/>
</dbReference>
<dbReference type="PRINTS" id="PR01466">
    <property type="entry name" value="ARGDEIMINASE"/>
</dbReference>
<dbReference type="SUPFAM" id="SSF55909">
    <property type="entry name" value="Pentein"/>
    <property type="match status" value="1"/>
</dbReference>
<protein>
    <recommendedName>
        <fullName>Arginine deiminase</fullName>
        <shortName>ADI</shortName>
        <ecNumber>3.5.3.6</ecNumber>
    </recommendedName>
    <alternativeName>
        <fullName>Arginine dihydrolase</fullName>
        <shortName>AD</shortName>
    </alternativeName>
    <alternativeName>
        <fullName>Streptococcal acid glycoprotein</fullName>
    </alternativeName>
</protein>
<gene>
    <name type="primary">arcA</name>
    <name type="synonym">sagP</name>
    <name type="ordered locus">SpyM50577</name>
</gene>
<proteinExistence type="evidence at protein level"/>
<evidence type="ECO:0000250" key="1"/>
<evidence type="ECO:0000269" key="2">
    <source>
    </source>
</evidence>
<evidence type="ECO:0000305" key="3"/>
<name>ARCA_STRPG</name>
<keyword id="KW-0056">Arginine metabolism</keyword>
<keyword id="KW-0963">Cytoplasm</keyword>
<keyword id="KW-0903">Direct protein sequencing</keyword>
<keyword id="KW-0325">Glycoprotein</keyword>
<keyword id="KW-0378">Hydrolase</keyword>
<feature type="initiator methionine" description="Removed" evidence="2">
    <location>
        <position position="1"/>
    </location>
</feature>
<feature type="chain" id="PRO_0000182250" description="Arginine deiminase">
    <location>
        <begin position="2"/>
        <end position="411"/>
    </location>
</feature>
<feature type="active site" description="Amidino-cysteine intermediate" evidence="1">
    <location>
        <position position="401"/>
    </location>
</feature>
<organism>
    <name type="scientific">Streptococcus pyogenes serotype M5 (strain Manfredo)</name>
    <dbReference type="NCBI Taxonomy" id="160491"/>
    <lineage>
        <taxon>Bacteria</taxon>
        <taxon>Bacillati</taxon>
        <taxon>Bacillota</taxon>
        <taxon>Bacilli</taxon>
        <taxon>Lactobacillales</taxon>
        <taxon>Streptococcaceae</taxon>
        <taxon>Streptococcus</taxon>
    </lineage>
</organism>
<sequence>MTAQTPIHVYSEIGKLKKVLLHRPGKEIENLMPDYLERLLFDDIPFLEDAQKEHDAFAQALRDEGIEVLYLETLAAESLVTPEIREAFIDEYLSEANIRGRATKKAIRELLMAIEDNQELIEKTMAGVQKSELPEIPASEKGLTDLVESNYPFAIDPMPNLYFTRDPFATIGTGVSLNHMFSETRNRETLYGKYIFTHHPIYGGGKVPMVYDRNETTRIEGGDELVLSKDVLAVGISQRTDAASIEKLLVNIFKQNLGFKKVLAFEFANNRKFMHLDTVFTMVDYDKFTIHPEIEGDLRVYSVTYDNEELHIIEEKGDLAELLAANLGVEKVDLIRCGGDNLVAAGREQWNDGSNTLTIAPGVVVVYNRNTITNAILESKGLKLIKIHGSELVRGRGGPRCMSMPFEREDI</sequence>
<accession>P58827</accession>
<accession>A2RDI9</accession>